<dbReference type="EC" id="3.5.4.6" evidence="7"/>
<dbReference type="EMBL" id="D12775">
    <property type="protein sequence ID" value="BAA02240.1"/>
    <property type="molecule type" value="mRNA"/>
</dbReference>
<dbReference type="EMBL" id="M84720">
    <property type="protein sequence ID" value="AAA58365.1"/>
    <property type="molecule type" value="mRNA"/>
</dbReference>
<dbReference type="EMBL" id="M84721">
    <property type="protein sequence ID" value="AAA58366.1"/>
    <property type="molecule type" value="mRNA"/>
</dbReference>
<dbReference type="EMBL" id="M84722">
    <property type="protein sequence ID" value="AAA58367.1"/>
    <property type="molecule type" value="mRNA"/>
</dbReference>
<dbReference type="EMBL" id="U29926">
    <property type="protein sequence ID" value="AAB60410.1"/>
    <property type="molecule type" value="Genomic_DNA"/>
</dbReference>
<dbReference type="EMBL" id="U29929">
    <property type="protein sequence ID" value="AAB60410.1"/>
    <property type="status" value="JOINED"/>
    <property type="molecule type" value="Genomic_DNA"/>
</dbReference>
<dbReference type="EMBL" id="U29907">
    <property type="protein sequence ID" value="AAB60410.1"/>
    <property type="status" value="JOINED"/>
    <property type="molecule type" value="Genomic_DNA"/>
</dbReference>
<dbReference type="EMBL" id="U29909">
    <property type="protein sequence ID" value="AAB60410.1"/>
    <property type="status" value="JOINED"/>
    <property type="molecule type" value="Genomic_DNA"/>
</dbReference>
<dbReference type="EMBL" id="U29910">
    <property type="protein sequence ID" value="AAB60410.1"/>
    <property type="status" value="JOINED"/>
    <property type="molecule type" value="Genomic_DNA"/>
</dbReference>
<dbReference type="EMBL" id="U29911">
    <property type="protein sequence ID" value="AAB60410.1"/>
    <property type="status" value="JOINED"/>
    <property type="molecule type" value="Genomic_DNA"/>
</dbReference>
<dbReference type="EMBL" id="U29916">
    <property type="protein sequence ID" value="AAB60410.1"/>
    <property type="status" value="JOINED"/>
    <property type="molecule type" value="Genomic_DNA"/>
</dbReference>
<dbReference type="EMBL" id="U29917">
    <property type="protein sequence ID" value="AAB60410.1"/>
    <property type="status" value="JOINED"/>
    <property type="molecule type" value="Genomic_DNA"/>
</dbReference>
<dbReference type="EMBL" id="U29918">
    <property type="protein sequence ID" value="AAB60410.1"/>
    <property type="status" value="JOINED"/>
    <property type="molecule type" value="Genomic_DNA"/>
</dbReference>
<dbReference type="EMBL" id="U29922">
    <property type="protein sequence ID" value="AAB60410.1"/>
    <property type="status" value="JOINED"/>
    <property type="molecule type" value="Genomic_DNA"/>
</dbReference>
<dbReference type="EMBL" id="U29924">
    <property type="protein sequence ID" value="AAB60410.1"/>
    <property type="status" value="JOINED"/>
    <property type="molecule type" value="Genomic_DNA"/>
</dbReference>
<dbReference type="EMBL" id="U29925">
    <property type="protein sequence ID" value="AAB60410.1"/>
    <property type="status" value="JOINED"/>
    <property type="molecule type" value="Genomic_DNA"/>
</dbReference>
<dbReference type="EMBL" id="U29926">
    <property type="protein sequence ID" value="AAB60408.1"/>
    <property type="molecule type" value="Genomic_DNA"/>
</dbReference>
<dbReference type="EMBL" id="U29912">
    <property type="protein sequence ID" value="AAB60408.1"/>
    <property type="status" value="JOINED"/>
    <property type="molecule type" value="Genomic_DNA"/>
</dbReference>
<dbReference type="EMBL" id="U29929">
    <property type="protein sequence ID" value="AAB60408.1"/>
    <property type="status" value="JOINED"/>
    <property type="molecule type" value="Genomic_DNA"/>
</dbReference>
<dbReference type="EMBL" id="U29907">
    <property type="protein sequence ID" value="AAB60408.1"/>
    <property type="status" value="JOINED"/>
    <property type="molecule type" value="Genomic_DNA"/>
</dbReference>
<dbReference type="EMBL" id="U29909">
    <property type="protein sequence ID" value="AAB60408.1"/>
    <property type="status" value="JOINED"/>
    <property type="molecule type" value="Genomic_DNA"/>
</dbReference>
<dbReference type="EMBL" id="U29910">
    <property type="protein sequence ID" value="AAB60408.1"/>
    <property type="status" value="JOINED"/>
    <property type="molecule type" value="Genomic_DNA"/>
</dbReference>
<dbReference type="EMBL" id="U29911">
    <property type="protein sequence ID" value="AAB60408.1"/>
    <property type="status" value="JOINED"/>
    <property type="molecule type" value="Genomic_DNA"/>
</dbReference>
<dbReference type="EMBL" id="U29916">
    <property type="protein sequence ID" value="AAB60408.1"/>
    <property type="status" value="JOINED"/>
    <property type="molecule type" value="Genomic_DNA"/>
</dbReference>
<dbReference type="EMBL" id="U29917">
    <property type="protein sequence ID" value="AAB60408.1"/>
    <property type="status" value="JOINED"/>
    <property type="molecule type" value="Genomic_DNA"/>
</dbReference>
<dbReference type="EMBL" id="U29918">
    <property type="protein sequence ID" value="AAB60408.1"/>
    <property type="status" value="JOINED"/>
    <property type="molecule type" value="Genomic_DNA"/>
</dbReference>
<dbReference type="EMBL" id="U29922">
    <property type="protein sequence ID" value="AAB60408.1"/>
    <property type="status" value="JOINED"/>
    <property type="molecule type" value="Genomic_DNA"/>
</dbReference>
<dbReference type="EMBL" id="U29924">
    <property type="protein sequence ID" value="AAB60408.1"/>
    <property type="status" value="JOINED"/>
    <property type="molecule type" value="Genomic_DNA"/>
</dbReference>
<dbReference type="EMBL" id="U29925">
    <property type="protein sequence ID" value="AAB60408.1"/>
    <property type="status" value="JOINED"/>
    <property type="molecule type" value="Genomic_DNA"/>
</dbReference>
<dbReference type="EMBL" id="U29926">
    <property type="protein sequence ID" value="AAB60409.1"/>
    <property type="molecule type" value="Genomic_DNA"/>
</dbReference>
<dbReference type="EMBL" id="U29927">
    <property type="protein sequence ID" value="AAB60409.1"/>
    <property type="status" value="JOINED"/>
    <property type="molecule type" value="Genomic_DNA"/>
</dbReference>
<dbReference type="EMBL" id="U29929">
    <property type="protein sequence ID" value="AAB60409.1"/>
    <property type="status" value="JOINED"/>
    <property type="molecule type" value="Genomic_DNA"/>
</dbReference>
<dbReference type="EMBL" id="U29907">
    <property type="protein sequence ID" value="AAB60409.1"/>
    <property type="status" value="JOINED"/>
    <property type="molecule type" value="Genomic_DNA"/>
</dbReference>
<dbReference type="EMBL" id="U29909">
    <property type="protein sequence ID" value="AAB60409.1"/>
    <property type="status" value="JOINED"/>
    <property type="molecule type" value="Genomic_DNA"/>
</dbReference>
<dbReference type="EMBL" id="U29910">
    <property type="protein sequence ID" value="AAB60409.1"/>
    <property type="status" value="JOINED"/>
    <property type="molecule type" value="Genomic_DNA"/>
</dbReference>
<dbReference type="EMBL" id="U29911">
    <property type="protein sequence ID" value="AAB60409.1"/>
    <property type="status" value="JOINED"/>
    <property type="molecule type" value="Genomic_DNA"/>
</dbReference>
<dbReference type="EMBL" id="U29916">
    <property type="protein sequence ID" value="AAB60409.1"/>
    <property type="status" value="JOINED"/>
    <property type="molecule type" value="Genomic_DNA"/>
</dbReference>
<dbReference type="EMBL" id="U29917">
    <property type="protein sequence ID" value="AAB60409.1"/>
    <property type="status" value="JOINED"/>
    <property type="molecule type" value="Genomic_DNA"/>
</dbReference>
<dbReference type="EMBL" id="U29918">
    <property type="protein sequence ID" value="AAB60409.1"/>
    <property type="status" value="JOINED"/>
    <property type="molecule type" value="Genomic_DNA"/>
</dbReference>
<dbReference type="EMBL" id="U29922">
    <property type="protein sequence ID" value="AAB60409.1"/>
    <property type="status" value="JOINED"/>
    <property type="molecule type" value="Genomic_DNA"/>
</dbReference>
<dbReference type="EMBL" id="U29924">
    <property type="protein sequence ID" value="AAB60409.1"/>
    <property type="status" value="JOINED"/>
    <property type="molecule type" value="Genomic_DNA"/>
</dbReference>
<dbReference type="EMBL" id="U29925">
    <property type="protein sequence ID" value="AAB60409.1"/>
    <property type="status" value="JOINED"/>
    <property type="molecule type" value="Genomic_DNA"/>
</dbReference>
<dbReference type="EMBL" id="D31646">
    <property type="protein sequence ID" value="BAA06505.1"/>
    <property type="molecule type" value="Genomic_DNA"/>
</dbReference>
<dbReference type="EMBL" id="AK289998">
    <property type="protein sequence ID" value="BAF82687.1"/>
    <property type="molecule type" value="mRNA"/>
</dbReference>
<dbReference type="EMBL" id="AK295046">
    <property type="protein sequence ID" value="BAH11958.1"/>
    <property type="molecule type" value="mRNA"/>
</dbReference>
<dbReference type="EMBL" id="AK301507">
    <property type="protein sequence ID" value="BAH13499.1"/>
    <property type="molecule type" value="mRNA"/>
</dbReference>
<dbReference type="EMBL" id="AK302970">
    <property type="protein sequence ID" value="BAH13863.1"/>
    <property type="molecule type" value="mRNA"/>
</dbReference>
<dbReference type="EMBL" id="AC084117">
    <property type="status" value="NOT_ANNOTATED_CDS"/>
    <property type="molecule type" value="Genomic_DNA"/>
</dbReference>
<dbReference type="EMBL" id="CH471064">
    <property type="protein sequence ID" value="EAW68567.1"/>
    <property type="molecule type" value="Genomic_DNA"/>
</dbReference>
<dbReference type="EMBL" id="CH471064">
    <property type="protein sequence ID" value="EAW68568.1"/>
    <property type="molecule type" value="Genomic_DNA"/>
</dbReference>
<dbReference type="EMBL" id="CH471064">
    <property type="protein sequence ID" value="EAW68569.1"/>
    <property type="molecule type" value="Genomic_DNA"/>
</dbReference>
<dbReference type="EMBL" id="BC126118">
    <property type="protein sequence ID" value="AAI26119.1"/>
    <property type="molecule type" value="mRNA"/>
</dbReference>
<dbReference type="CCDS" id="CCDS41617.1">
    <molecule id="Q01432-1"/>
</dbReference>
<dbReference type="CCDS" id="CCDS44537.1">
    <molecule id="Q01432-5"/>
</dbReference>
<dbReference type="CCDS" id="CCDS53601.1">
    <molecule id="Q01432-6"/>
</dbReference>
<dbReference type="CCDS" id="CCDS7802.1">
    <molecule id="Q01432-4"/>
</dbReference>
<dbReference type="PIR" id="S68146">
    <property type="entry name" value="S68146"/>
</dbReference>
<dbReference type="PIR" id="S68147">
    <property type="entry name" value="S68147"/>
</dbReference>
<dbReference type="RefSeq" id="NP_000471.1">
    <molecule id="Q01432-4"/>
    <property type="nucleotide sequence ID" value="NM_000480.3"/>
</dbReference>
<dbReference type="RefSeq" id="NP_001020560.1">
    <molecule id="Q01432-1"/>
    <property type="nucleotide sequence ID" value="NM_001025389.2"/>
</dbReference>
<dbReference type="RefSeq" id="NP_001020561.1">
    <molecule id="Q01432-5"/>
    <property type="nucleotide sequence ID" value="NM_001025390.2"/>
</dbReference>
<dbReference type="RefSeq" id="NP_001165901.1">
    <molecule id="Q01432-1"/>
    <property type="nucleotide sequence ID" value="NM_001172430.1"/>
</dbReference>
<dbReference type="RefSeq" id="NP_001165902.1">
    <molecule id="Q01432-6"/>
    <property type="nucleotide sequence ID" value="NM_001172431.2"/>
</dbReference>
<dbReference type="SMR" id="Q01432"/>
<dbReference type="BioGRID" id="106769">
    <property type="interactions" value="16"/>
</dbReference>
<dbReference type="ELM" id="Q01432"/>
<dbReference type="FunCoup" id="Q01432">
    <property type="interactions" value="595"/>
</dbReference>
<dbReference type="IntAct" id="Q01432">
    <property type="interactions" value="13"/>
</dbReference>
<dbReference type="STRING" id="9606.ENSP00000379802"/>
<dbReference type="BindingDB" id="Q01432"/>
<dbReference type="ChEMBL" id="CHEMBL2912"/>
<dbReference type="CarbonylDB" id="Q01432"/>
<dbReference type="GlyGen" id="Q01432">
    <property type="glycosylation" value="1 site"/>
</dbReference>
<dbReference type="iPTMnet" id="Q01432"/>
<dbReference type="PhosphoSitePlus" id="Q01432"/>
<dbReference type="BioMuta" id="AMPD3"/>
<dbReference type="DMDM" id="399033"/>
<dbReference type="jPOST" id="Q01432"/>
<dbReference type="MassIVE" id="Q01432"/>
<dbReference type="PaxDb" id="9606-ENSP00000379802"/>
<dbReference type="PeptideAtlas" id="Q01432"/>
<dbReference type="ProteomicsDB" id="57945">
    <molecule id="Q01432-1"/>
</dbReference>
<dbReference type="ProteomicsDB" id="57946">
    <molecule id="Q01432-2"/>
</dbReference>
<dbReference type="ProteomicsDB" id="57947">
    <molecule id="Q01432-3"/>
</dbReference>
<dbReference type="ProteomicsDB" id="57948">
    <molecule id="Q01432-4"/>
</dbReference>
<dbReference type="ProteomicsDB" id="57949">
    <molecule id="Q01432-5"/>
</dbReference>
<dbReference type="Pumba" id="Q01432"/>
<dbReference type="Antibodypedia" id="42354">
    <property type="antibodies" value="296 antibodies from 33 providers"/>
</dbReference>
<dbReference type="DNASU" id="272"/>
<dbReference type="Ensembl" id="ENST00000396553.7">
    <molecule id="Q01432-1"/>
    <property type="protein sequence ID" value="ENSP00000379801.2"/>
    <property type="gene ID" value="ENSG00000133805.16"/>
</dbReference>
<dbReference type="Ensembl" id="ENST00000396554.7">
    <molecule id="Q01432-4"/>
    <property type="protein sequence ID" value="ENSP00000379802.3"/>
    <property type="gene ID" value="ENSG00000133805.16"/>
</dbReference>
<dbReference type="Ensembl" id="ENST00000444303.6">
    <molecule id="Q01432-6"/>
    <property type="protein sequence ID" value="ENSP00000396000.2"/>
    <property type="gene ID" value="ENSG00000133805.16"/>
</dbReference>
<dbReference type="Ensembl" id="ENST00000528723.5">
    <molecule id="Q01432-5"/>
    <property type="protein sequence ID" value="ENSP00000436987.1"/>
    <property type="gene ID" value="ENSG00000133805.16"/>
</dbReference>
<dbReference type="Ensembl" id="ENST00000529507.5">
    <molecule id="Q01432-1"/>
    <property type="protein sequence ID" value="ENSP00000431648.1"/>
    <property type="gene ID" value="ENSG00000133805.16"/>
</dbReference>
<dbReference type="GeneID" id="272"/>
<dbReference type="KEGG" id="hsa:272"/>
<dbReference type="MANE-Select" id="ENST00000396553.7">
    <property type="protein sequence ID" value="ENSP00000379801.2"/>
    <property type="RefSeq nucleotide sequence ID" value="NM_001025389.2"/>
    <property type="RefSeq protein sequence ID" value="NP_001020560.1"/>
</dbReference>
<dbReference type="UCSC" id="uc001min.2">
    <molecule id="Q01432-1"/>
    <property type="organism name" value="human"/>
</dbReference>
<dbReference type="AGR" id="HGNC:470"/>
<dbReference type="CTD" id="272"/>
<dbReference type="DisGeNET" id="272"/>
<dbReference type="GeneCards" id="AMPD3"/>
<dbReference type="HGNC" id="HGNC:470">
    <property type="gene designation" value="AMPD3"/>
</dbReference>
<dbReference type="HPA" id="ENSG00000133805">
    <property type="expression patterns" value="Tissue enhanced (bone marrow, skeletal muscle)"/>
</dbReference>
<dbReference type="MalaCards" id="AMPD3"/>
<dbReference type="MIM" id="102772">
    <property type="type" value="gene"/>
</dbReference>
<dbReference type="MIM" id="612874">
    <property type="type" value="phenotype"/>
</dbReference>
<dbReference type="neXtProt" id="NX_Q01432"/>
<dbReference type="OpenTargets" id="ENSG00000133805"/>
<dbReference type="Orphanet" id="45">
    <property type="disease" value="Adenosine monophosphate deaminase deficiency"/>
</dbReference>
<dbReference type="PharmGKB" id="PA24778"/>
<dbReference type="VEuPathDB" id="HostDB:ENSG00000133805"/>
<dbReference type="eggNOG" id="KOG1096">
    <property type="taxonomic scope" value="Eukaryota"/>
</dbReference>
<dbReference type="GeneTree" id="ENSGT00950000183011"/>
<dbReference type="HOGENOM" id="CLU_003782_4_0_1"/>
<dbReference type="InParanoid" id="Q01432"/>
<dbReference type="OMA" id="GNAGPEC"/>
<dbReference type="OrthoDB" id="1723809at2759"/>
<dbReference type="PAN-GO" id="Q01432">
    <property type="GO annotations" value="4 GO annotations based on evolutionary models"/>
</dbReference>
<dbReference type="PhylomeDB" id="Q01432"/>
<dbReference type="TreeFam" id="TF300439"/>
<dbReference type="BRENDA" id="3.5.4.6">
    <property type="organism ID" value="2681"/>
</dbReference>
<dbReference type="PathwayCommons" id="Q01432"/>
<dbReference type="Reactome" id="R-HSA-6798695">
    <property type="pathway name" value="Neutrophil degranulation"/>
</dbReference>
<dbReference type="Reactome" id="R-HSA-74217">
    <property type="pathway name" value="Purine salvage"/>
</dbReference>
<dbReference type="SABIO-RK" id="Q01432"/>
<dbReference type="SignaLink" id="Q01432"/>
<dbReference type="UniPathway" id="UPA00591">
    <property type="reaction ID" value="UER00663"/>
</dbReference>
<dbReference type="BioGRID-ORCS" id="272">
    <property type="hits" value="14 hits in 1158 CRISPR screens"/>
</dbReference>
<dbReference type="ChiTaRS" id="AMPD3">
    <property type="organism name" value="human"/>
</dbReference>
<dbReference type="GeneWiki" id="AMPD3"/>
<dbReference type="GenomeRNAi" id="272"/>
<dbReference type="Pharos" id="Q01432">
    <property type="development level" value="Tchem"/>
</dbReference>
<dbReference type="PRO" id="PR:Q01432"/>
<dbReference type="Proteomes" id="UP000005640">
    <property type="component" value="Chromosome 11"/>
</dbReference>
<dbReference type="RNAct" id="Q01432">
    <property type="molecule type" value="protein"/>
</dbReference>
<dbReference type="Bgee" id="ENSG00000133805">
    <property type="expression patterns" value="Expressed in gluteal muscle and 196 other cell types or tissues"/>
</dbReference>
<dbReference type="ExpressionAtlas" id="Q01432">
    <property type="expression patterns" value="baseline and differential"/>
</dbReference>
<dbReference type="GO" id="GO:0005829">
    <property type="term" value="C:cytosol"/>
    <property type="evidence" value="ECO:0000318"/>
    <property type="project" value="GO_Central"/>
</dbReference>
<dbReference type="GO" id="GO:0005576">
    <property type="term" value="C:extracellular region"/>
    <property type="evidence" value="ECO:0000304"/>
    <property type="project" value="Reactome"/>
</dbReference>
<dbReference type="GO" id="GO:1904813">
    <property type="term" value="C:ficolin-1-rich granule lumen"/>
    <property type="evidence" value="ECO:0000304"/>
    <property type="project" value="Reactome"/>
</dbReference>
<dbReference type="GO" id="GO:0034774">
    <property type="term" value="C:secretory granule lumen"/>
    <property type="evidence" value="ECO:0000304"/>
    <property type="project" value="Reactome"/>
</dbReference>
<dbReference type="GO" id="GO:0003876">
    <property type="term" value="F:AMP deaminase activity"/>
    <property type="evidence" value="ECO:0000250"/>
    <property type="project" value="UniProtKB"/>
</dbReference>
<dbReference type="GO" id="GO:0046872">
    <property type="term" value="F:metal ion binding"/>
    <property type="evidence" value="ECO:0007669"/>
    <property type="project" value="UniProtKB-KW"/>
</dbReference>
<dbReference type="GO" id="GO:0006196">
    <property type="term" value="P:AMP catabolic process"/>
    <property type="evidence" value="ECO:0000304"/>
    <property type="project" value="ProtInc"/>
</dbReference>
<dbReference type="GO" id="GO:0046033">
    <property type="term" value="P:AMP metabolic process"/>
    <property type="evidence" value="ECO:0000318"/>
    <property type="project" value="GO_Central"/>
</dbReference>
<dbReference type="GO" id="GO:0006188">
    <property type="term" value="P:IMP biosynthetic process"/>
    <property type="evidence" value="ECO:0000318"/>
    <property type="project" value="GO_Central"/>
</dbReference>
<dbReference type="GO" id="GO:0032264">
    <property type="term" value="P:IMP salvage"/>
    <property type="evidence" value="ECO:0007669"/>
    <property type="project" value="UniProtKB-UniPathway"/>
</dbReference>
<dbReference type="CDD" id="cd01319">
    <property type="entry name" value="AMPD"/>
    <property type="match status" value="1"/>
</dbReference>
<dbReference type="FunFam" id="4.10.800.20:FF:000001">
    <property type="entry name" value="AMP deaminase"/>
    <property type="match status" value="1"/>
</dbReference>
<dbReference type="FunFam" id="3.20.20.140:FF:000171">
    <property type="entry name" value="AMP deaminase 3"/>
    <property type="match status" value="1"/>
</dbReference>
<dbReference type="Gene3D" id="4.10.800.20">
    <property type="match status" value="1"/>
</dbReference>
<dbReference type="Gene3D" id="3.20.20.140">
    <property type="entry name" value="Metal-dependent hydrolases"/>
    <property type="match status" value="1"/>
</dbReference>
<dbReference type="InterPro" id="IPR006650">
    <property type="entry name" value="A/AMP_deam_AS"/>
</dbReference>
<dbReference type="InterPro" id="IPR006329">
    <property type="entry name" value="AMPD"/>
</dbReference>
<dbReference type="InterPro" id="IPR032466">
    <property type="entry name" value="Metal_Hydrolase"/>
</dbReference>
<dbReference type="NCBIfam" id="TIGR01429">
    <property type="entry name" value="AMP_deaminase"/>
    <property type="match status" value="1"/>
</dbReference>
<dbReference type="PANTHER" id="PTHR11359">
    <property type="entry name" value="AMP DEAMINASE"/>
    <property type="match status" value="1"/>
</dbReference>
<dbReference type="PANTHER" id="PTHR11359:SF2">
    <property type="entry name" value="AMP DEAMINASE 3"/>
    <property type="match status" value="1"/>
</dbReference>
<dbReference type="Pfam" id="PF19326">
    <property type="entry name" value="AMP_deaminase"/>
    <property type="match status" value="1"/>
</dbReference>
<dbReference type="PIRSF" id="PIRSF001251">
    <property type="entry name" value="AMP_deaminase_met"/>
    <property type="match status" value="1"/>
</dbReference>
<dbReference type="SUPFAM" id="SSF51556">
    <property type="entry name" value="Metallo-dependent hydrolases"/>
    <property type="match status" value="1"/>
</dbReference>
<dbReference type="PROSITE" id="PS00485">
    <property type="entry name" value="A_DEAMINASE"/>
    <property type="match status" value="1"/>
</dbReference>
<organism>
    <name type="scientific">Homo sapiens</name>
    <name type="common">Human</name>
    <dbReference type="NCBI Taxonomy" id="9606"/>
    <lineage>
        <taxon>Eukaryota</taxon>
        <taxon>Metazoa</taxon>
        <taxon>Chordata</taxon>
        <taxon>Craniata</taxon>
        <taxon>Vertebrata</taxon>
        <taxon>Euteleostomi</taxon>
        <taxon>Mammalia</taxon>
        <taxon>Eutheria</taxon>
        <taxon>Euarchontoglires</taxon>
        <taxon>Primates</taxon>
        <taxon>Haplorrhini</taxon>
        <taxon>Catarrhini</taxon>
        <taxon>Hominidae</taxon>
        <taxon>Homo</taxon>
    </lineage>
</organism>
<keyword id="KW-0025">Alternative splicing</keyword>
<keyword id="KW-0225">Disease variant</keyword>
<keyword id="KW-0378">Hydrolase</keyword>
<keyword id="KW-0479">Metal-binding</keyword>
<keyword id="KW-0546">Nucleotide metabolism</keyword>
<keyword id="KW-0597">Phosphoprotein</keyword>
<keyword id="KW-1267">Proteomics identification</keyword>
<keyword id="KW-1185">Reference proteome</keyword>
<keyword id="KW-0862">Zinc</keyword>
<proteinExistence type="evidence at protein level"/>
<accession>Q01432</accession>
<accession>A0AUX0</accession>
<accession>B7Z2S2</accession>
<accession>B7Z763</accession>
<accession>B7Z877</accession>
<comment type="function">
    <text evidence="13">AMP deaminase plays a critical role in energy metabolism.</text>
</comment>
<comment type="catalytic activity">
    <reaction evidence="7">
        <text>AMP + H2O + H(+) = IMP + NH4(+)</text>
        <dbReference type="Rhea" id="RHEA:14777"/>
        <dbReference type="ChEBI" id="CHEBI:15377"/>
        <dbReference type="ChEBI" id="CHEBI:15378"/>
        <dbReference type="ChEBI" id="CHEBI:28938"/>
        <dbReference type="ChEBI" id="CHEBI:58053"/>
        <dbReference type="ChEBI" id="CHEBI:456215"/>
        <dbReference type="EC" id="3.5.4.6"/>
    </reaction>
    <physiologicalReaction direction="left-to-right" evidence="13">
        <dbReference type="Rhea" id="RHEA:14778"/>
    </physiologicalReaction>
</comment>
<comment type="cofactor">
    <cofactor evidence="1">
        <name>Zn(2+)</name>
        <dbReference type="ChEBI" id="CHEBI:29105"/>
    </cofactor>
    <text evidence="1">Binds 1 zinc ion per subunit.</text>
</comment>
<comment type="pathway">
    <text evidence="13">Purine metabolism; IMP biosynthesis via salvage pathway; IMP from AMP: step 1/1.</text>
</comment>
<comment type="subunit">
    <text>Homotetramer.</text>
</comment>
<comment type="interaction">
    <interactant intactId="EBI-1223554">
        <id>Q01432</id>
    </interactant>
    <interactant intactId="EBI-352572">
        <id>P08238</id>
        <label>HSP90AB1</label>
    </interactant>
    <organismsDiffer>false</organismsDiffer>
    <experiments>2</experiments>
</comment>
<comment type="interaction">
    <interactant intactId="EBI-11955621">
        <id>Q01432-4</id>
    </interactant>
    <interactant intactId="EBI-2959675">
        <id>P23109</id>
        <label>AMPD1</label>
    </interactant>
    <organismsDiffer>false</organismsDiffer>
    <experiments>3</experiments>
</comment>
<comment type="interaction">
    <interactant intactId="EBI-11955621">
        <id>Q01432-4</id>
    </interactant>
    <interactant intactId="EBI-22452746">
        <id>Q9NZI2-2</id>
        <label>KCNIP1</label>
    </interactant>
    <organismsDiffer>false</organismsDiffer>
    <experiments>3</experiments>
</comment>
<comment type="alternative products">
    <event type="alternative splicing"/>
    <isoform>
        <id>Q01432-1</id>
        <name>1B</name>
        <sequence type="displayed"/>
    </isoform>
    <isoform>
        <id>Q01432-2</id>
        <name>1A</name>
        <sequence type="described" ref="VSP_001275 VSP_001277"/>
    </isoform>
    <isoform>
        <id>Q01432-3</id>
        <name>1C</name>
        <sequence type="described" ref="VSP_001276 VSP_001278"/>
    </isoform>
    <isoform>
        <id>Q01432-4</id>
        <name>2</name>
        <sequence type="described" ref="VSP_001275"/>
    </isoform>
    <isoform>
        <id>Q01432-5</id>
        <name>3</name>
        <sequence type="described" ref="VSP_001276"/>
    </isoform>
    <isoform>
        <id>Q01432-6</id>
        <name>4</name>
        <sequence type="described" ref="VSP_044230"/>
    </isoform>
</comment>
<comment type="disease" evidence="4 5 6 8">
    <disease id="DI-00038">
        <name>Adenosine monophosphate deaminase deficiency erythrocyte type</name>
        <acronym>AMPDDE</acronym>
        <description>A metabolic disorder due to lack of activity of the erythrocyte isoform of AMP deaminase. It is a clinically asymptomatic condition characterized by a 50% increase in steady-state levels of ATP in affected cells. Individuals with complete deficiency of erythrocyte AMP deaminase are healthy and have no hematologic disorders.</description>
        <dbReference type="MIM" id="612874"/>
    </disease>
    <text>The disease is caused by variants affecting the gene represented in this entry.</text>
</comment>
<comment type="similarity">
    <text evidence="12">Belongs to the metallo-dependent hydrolases superfamily. Adenosine and AMP deaminases family.</text>
</comment>
<evidence type="ECO:0000250" key="1"/>
<evidence type="ECO:0000255" key="2">
    <source>
        <dbReference type="PROSITE-ProRule" id="PRU10104"/>
    </source>
</evidence>
<evidence type="ECO:0000256" key="3">
    <source>
        <dbReference type="SAM" id="MobiDB-lite"/>
    </source>
</evidence>
<evidence type="ECO:0000269" key="4">
    <source>
    </source>
</evidence>
<evidence type="ECO:0000269" key="5">
    <source>
    </source>
</evidence>
<evidence type="ECO:0000269" key="6">
    <source>
    </source>
</evidence>
<evidence type="ECO:0000269" key="7">
    <source>
    </source>
</evidence>
<evidence type="ECO:0000269" key="8">
    <source>
    </source>
</evidence>
<evidence type="ECO:0000303" key="9">
    <source>
    </source>
</evidence>
<evidence type="ECO:0000303" key="10">
    <source>
    </source>
</evidence>
<evidence type="ECO:0000303" key="11">
    <source>
    </source>
</evidence>
<evidence type="ECO:0000305" key="12"/>
<evidence type="ECO:0000305" key="13">
    <source>
    </source>
</evidence>
<evidence type="ECO:0000312" key="14">
    <source>
        <dbReference type="HGNC" id="HGNC:470"/>
    </source>
</evidence>
<evidence type="ECO:0007744" key="15">
    <source>
    </source>
</evidence>
<evidence type="ECO:0007744" key="16">
    <source>
    </source>
</evidence>
<gene>
    <name evidence="14" type="primary">AMPD3</name>
</gene>
<sequence length="767" mass="88812">MPRQFPKLNISEVDEQVRLLAEKVFAKVLREEDSKDALSLFTVPEDCPIGQKEAKERELQKELAEQKSVETAKRKKSFKMIRSQSLSLQMPPQQDWKGPPAASPAMSPTTPVVTGATSLPTPAPYAMPEFQRVTISGDYCAGITLEDYEQAAKSLAKALMIREKYARLAYHRFPRITSQYLGHPRADTAPPEEGLPDFHPPPLPQEDPYCLDDAPPNLDYLVHMQGGILFVYDNKKMLEHQEPHSLPYPDLETYTVDMSHILALITDGPTKTYCHRRLNFLESKFSLHEMLNEMSEFKELKSNPHRDFYNVRKVDTHIHAAACMNQKHLLRFIKHTYQTEPDRTVAEKRGRKITLRQVFDGLHMDPYDLTVDSLDVHAGRQTFHRFDKFNSKYNPVGASELRDLYLKTENYLGGEYFARMVKEVARELEESKYQYSEPRLSIYGRSPEEWPNLAYWFIQHKVYSPNMRWIIQVPRIYDIFRSKKLLPNFGKMLENIFLPLFKATINPQDHRELHLFLKYVTGFDSVDDESKHSDHMFSDKSPNPDVWTSEQNPPYSYYLYYMYANIMVLNNLRRERGLSTFLFRPHCGEAGSITHLVSAFLTADNISHGLLLKKSPVLQYLYYLAQIPIAMSPLSNNSLFLEYSKNPLREFLHKGLHVSLSTDDPMQFHYTKEALMEEYAIAAQVWKLSTCDLCEIARNSVLQSGLSHQEKQKFLGQNYYKEGPEGNDIRKTNVAQIRMAFRYETLCNELSFLSDAMKSEEITALTN</sequence>
<name>AMPD3_HUMAN</name>
<reference key="1">
    <citation type="journal article" date="1992" name="Biochim. Biophys. Acta">
        <title>Cloning and nucleotide sequence of the cDNA encoding human erythrocyte-specific AMP deaminase.</title>
        <authorList>
            <person name="Yamada Y."/>
            <person name="Goto H."/>
            <person name="Ogasawara N."/>
        </authorList>
    </citation>
    <scope>NUCLEOTIDE SEQUENCE [MRNA] (ISOFORM 1B)</scope>
</reference>
<reference key="2">
    <citation type="journal article" date="1992" name="J. Biol. Chem.">
        <title>Cloning of human AMP deaminase isoform E cDNAs. Evidence for a third AMPD gene exhibiting alternatively spliced 5'-exons.</title>
        <authorList>
            <person name="Mahnke-Zizelman D.K."/>
            <person name="Sabina R.L."/>
        </authorList>
    </citation>
    <scope>NUCLEOTIDE SEQUENCE [MRNA] (ISOFORMS 1A; 1B AND 1C)</scope>
    <source>
        <tissue>Keratinocyte</tissue>
    </source>
</reference>
<reference key="3">
    <citation type="journal article" date="1996" name="Biochim. Biophys. Acta">
        <title>Characterization of the human AMPD3 gene reveals that 5' exon useage is subject to transcriptional control by three tandem promoters and alternative splicing.</title>
        <authorList>
            <person name="Mahnke-Zizelman D.K."/>
            <person name="Eddy R."/>
            <person name="Shows T.B."/>
            <person name="Sabina R.L."/>
        </authorList>
    </citation>
    <scope>NUCLEOTIDE SEQUENCE [GENOMIC DNA] (ISOFORMS 1B; 2 AND 3)</scope>
    <scope>ALTERNATIVE SPLICING</scope>
</reference>
<reference key="4">
    <citation type="journal article" date="1994" name="Hum. Mol. Genet.">
        <title>A point mutation responsible for human erythrocyte AMP deaminase deficiency.</title>
        <authorList>
            <person name="Yamada Y."/>
            <person name="Goto H."/>
            <person name="Ogasawara N."/>
        </authorList>
    </citation>
    <scope>NUCLEOTIDE SEQUENCE [GENOMIC DNA] (ISOFORM 1B)</scope>
    <scope>VARIANT AMPDDE CYS-573</scope>
</reference>
<reference key="5">
    <citation type="journal article" date="2004" name="Nat. Genet.">
        <title>Complete sequencing and characterization of 21,243 full-length human cDNAs.</title>
        <authorList>
            <person name="Ota T."/>
            <person name="Suzuki Y."/>
            <person name="Nishikawa T."/>
            <person name="Otsuki T."/>
            <person name="Sugiyama T."/>
            <person name="Irie R."/>
            <person name="Wakamatsu A."/>
            <person name="Hayashi K."/>
            <person name="Sato H."/>
            <person name="Nagai K."/>
            <person name="Kimura K."/>
            <person name="Makita H."/>
            <person name="Sekine M."/>
            <person name="Obayashi M."/>
            <person name="Nishi T."/>
            <person name="Shibahara T."/>
            <person name="Tanaka T."/>
            <person name="Ishii S."/>
            <person name="Yamamoto J."/>
            <person name="Saito K."/>
            <person name="Kawai Y."/>
            <person name="Isono Y."/>
            <person name="Nakamura Y."/>
            <person name="Nagahari K."/>
            <person name="Murakami K."/>
            <person name="Yasuda T."/>
            <person name="Iwayanagi T."/>
            <person name="Wagatsuma M."/>
            <person name="Shiratori A."/>
            <person name="Sudo H."/>
            <person name="Hosoiri T."/>
            <person name="Kaku Y."/>
            <person name="Kodaira H."/>
            <person name="Kondo H."/>
            <person name="Sugawara M."/>
            <person name="Takahashi M."/>
            <person name="Kanda K."/>
            <person name="Yokoi T."/>
            <person name="Furuya T."/>
            <person name="Kikkawa E."/>
            <person name="Omura Y."/>
            <person name="Abe K."/>
            <person name="Kamihara K."/>
            <person name="Katsuta N."/>
            <person name="Sato K."/>
            <person name="Tanikawa M."/>
            <person name="Yamazaki M."/>
            <person name="Ninomiya K."/>
            <person name="Ishibashi T."/>
            <person name="Yamashita H."/>
            <person name="Murakawa K."/>
            <person name="Fujimori K."/>
            <person name="Tanai H."/>
            <person name="Kimata M."/>
            <person name="Watanabe M."/>
            <person name="Hiraoka S."/>
            <person name="Chiba Y."/>
            <person name="Ishida S."/>
            <person name="Ono Y."/>
            <person name="Takiguchi S."/>
            <person name="Watanabe S."/>
            <person name="Yosida M."/>
            <person name="Hotuta T."/>
            <person name="Kusano J."/>
            <person name="Kanehori K."/>
            <person name="Takahashi-Fujii A."/>
            <person name="Hara H."/>
            <person name="Tanase T.-O."/>
            <person name="Nomura Y."/>
            <person name="Togiya S."/>
            <person name="Komai F."/>
            <person name="Hara R."/>
            <person name="Takeuchi K."/>
            <person name="Arita M."/>
            <person name="Imose N."/>
            <person name="Musashino K."/>
            <person name="Yuuki H."/>
            <person name="Oshima A."/>
            <person name="Sasaki N."/>
            <person name="Aotsuka S."/>
            <person name="Yoshikawa Y."/>
            <person name="Matsunawa H."/>
            <person name="Ichihara T."/>
            <person name="Shiohata N."/>
            <person name="Sano S."/>
            <person name="Moriya S."/>
            <person name="Momiyama H."/>
            <person name="Satoh N."/>
            <person name="Takami S."/>
            <person name="Terashima Y."/>
            <person name="Suzuki O."/>
            <person name="Nakagawa S."/>
            <person name="Senoh A."/>
            <person name="Mizoguchi H."/>
            <person name="Goto Y."/>
            <person name="Shimizu F."/>
            <person name="Wakebe H."/>
            <person name="Hishigaki H."/>
            <person name="Watanabe T."/>
            <person name="Sugiyama A."/>
            <person name="Takemoto M."/>
            <person name="Kawakami B."/>
            <person name="Yamazaki M."/>
            <person name="Watanabe K."/>
            <person name="Kumagai A."/>
            <person name="Itakura S."/>
            <person name="Fukuzumi Y."/>
            <person name="Fujimori Y."/>
            <person name="Komiyama M."/>
            <person name="Tashiro H."/>
            <person name="Tanigami A."/>
            <person name="Fujiwara T."/>
            <person name="Ono T."/>
            <person name="Yamada K."/>
            <person name="Fujii Y."/>
            <person name="Ozaki K."/>
            <person name="Hirao M."/>
            <person name="Ohmori Y."/>
            <person name="Kawabata A."/>
            <person name="Hikiji T."/>
            <person name="Kobatake N."/>
            <person name="Inagaki H."/>
            <person name="Ikema Y."/>
            <person name="Okamoto S."/>
            <person name="Okitani R."/>
            <person name="Kawakami T."/>
            <person name="Noguchi S."/>
            <person name="Itoh T."/>
            <person name="Shigeta K."/>
            <person name="Senba T."/>
            <person name="Matsumura K."/>
            <person name="Nakajima Y."/>
            <person name="Mizuno T."/>
            <person name="Morinaga M."/>
            <person name="Sasaki M."/>
            <person name="Togashi T."/>
            <person name="Oyama M."/>
            <person name="Hata H."/>
            <person name="Watanabe M."/>
            <person name="Komatsu T."/>
            <person name="Mizushima-Sugano J."/>
            <person name="Satoh T."/>
            <person name="Shirai Y."/>
            <person name="Takahashi Y."/>
            <person name="Nakagawa K."/>
            <person name="Okumura K."/>
            <person name="Nagase T."/>
            <person name="Nomura N."/>
            <person name="Kikuchi H."/>
            <person name="Masuho Y."/>
            <person name="Yamashita R."/>
            <person name="Nakai K."/>
            <person name="Yada T."/>
            <person name="Nakamura Y."/>
            <person name="Ohara O."/>
            <person name="Isogai T."/>
            <person name="Sugano S."/>
        </authorList>
    </citation>
    <scope>NUCLEOTIDE SEQUENCE [LARGE SCALE MRNA] (ISOFORMS 1B; 2; 3 AND 4)</scope>
    <source>
        <tissue>Brain</tissue>
        <tissue>Synovium</tissue>
        <tissue>Testis</tissue>
    </source>
</reference>
<reference key="6">
    <citation type="journal article" date="2006" name="Nature">
        <title>Human chromosome 11 DNA sequence and analysis including novel gene identification.</title>
        <authorList>
            <person name="Taylor T.D."/>
            <person name="Noguchi H."/>
            <person name="Totoki Y."/>
            <person name="Toyoda A."/>
            <person name="Kuroki Y."/>
            <person name="Dewar K."/>
            <person name="Lloyd C."/>
            <person name="Itoh T."/>
            <person name="Takeda T."/>
            <person name="Kim D.-W."/>
            <person name="She X."/>
            <person name="Barlow K.F."/>
            <person name="Bloom T."/>
            <person name="Bruford E."/>
            <person name="Chang J.L."/>
            <person name="Cuomo C.A."/>
            <person name="Eichler E."/>
            <person name="FitzGerald M.G."/>
            <person name="Jaffe D.B."/>
            <person name="LaButti K."/>
            <person name="Nicol R."/>
            <person name="Park H.-S."/>
            <person name="Seaman C."/>
            <person name="Sougnez C."/>
            <person name="Yang X."/>
            <person name="Zimmer A.R."/>
            <person name="Zody M.C."/>
            <person name="Birren B.W."/>
            <person name="Nusbaum C."/>
            <person name="Fujiyama A."/>
            <person name="Hattori M."/>
            <person name="Rogers J."/>
            <person name="Lander E.S."/>
            <person name="Sakaki Y."/>
        </authorList>
    </citation>
    <scope>NUCLEOTIDE SEQUENCE [LARGE SCALE GENOMIC DNA]</scope>
</reference>
<reference key="7">
    <citation type="submission" date="2005-09" db="EMBL/GenBank/DDBJ databases">
        <authorList>
            <person name="Mural R.J."/>
            <person name="Istrail S."/>
            <person name="Sutton G.G."/>
            <person name="Florea L."/>
            <person name="Halpern A.L."/>
            <person name="Mobarry C.M."/>
            <person name="Lippert R."/>
            <person name="Walenz B."/>
            <person name="Shatkay H."/>
            <person name="Dew I."/>
            <person name="Miller J.R."/>
            <person name="Flanigan M.J."/>
            <person name="Edwards N.J."/>
            <person name="Bolanos R."/>
            <person name="Fasulo D."/>
            <person name="Halldorsson B.V."/>
            <person name="Hannenhalli S."/>
            <person name="Turner R."/>
            <person name="Yooseph S."/>
            <person name="Lu F."/>
            <person name="Nusskern D.R."/>
            <person name="Shue B.C."/>
            <person name="Zheng X.H."/>
            <person name="Zhong F."/>
            <person name="Delcher A.L."/>
            <person name="Huson D.H."/>
            <person name="Kravitz S.A."/>
            <person name="Mouchard L."/>
            <person name="Reinert K."/>
            <person name="Remington K.A."/>
            <person name="Clark A.G."/>
            <person name="Waterman M.S."/>
            <person name="Eichler E.E."/>
            <person name="Adams M.D."/>
            <person name="Hunkapiller M.W."/>
            <person name="Myers E.W."/>
            <person name="Venter J.C."/>
        </authorList>
    </citation>
    <scope>NUCLEOTIDE SEQUENCE [LARGE SCALE GENOMIC DNA]</scope>
</reference>
<reference key="8">
    <citation type="journal article" date="2004" name="Genome Res.">
        <title>The status, quality, and expansion of the NIH full-length cDNA project: the Mammalian Gene Collection (MGC).</title>
        <authorList>
            <consortium name="The MGC Project Team"/>
        </authorList>
    </citation>
    <scope>NUCLEOTIDE SEQUENCE [LARGE SCALE MRNA] (ISOFORM 2)</scope>
</reference>
<reference key="9">
    <citation type="journal article" date="1997" name="Biochem. J.">
        <title>Regulation of rat AMP deaminase 3 (isoform C) by development and skeletal muscle fibre type.</title>
        <authorList>
            <person name="Mahnke-Zizelman D.K."/>
            <person name="D'Cunha J."/>
            <person name="Wojnar J.M."/>
            <person name="Brogley M.A."/>
            <person name="Sabina R.L."/>
        </authorList>
    </citation>
    <scope>FUNCTION</scope>
    <scope>CATALYTIC ACTIVITY</scope>
    <scope>PATHWAY</scope>
    <source>
        <tissue>Heart</tissue>
    </source>
</reference>
<reference key="10">
    <citation type="journal article" date="2009" name="Sci. Signal.">
        <title>Quantitative phosphoproteomic analysis of T cell receptor signaling reveals system-wide modulation of protein-protein interactions.</title>
        <authorList>
            <person name="Mayya V."/>
            <person name="Lundgren D.H."/>
            <person name="Hwang S.-I."/>
            <person name="Rezaul K."/>
            <person name="Wu L."/>
            <person name="Eng J.K."/>
            <person name="Rodionov V."/>
            <person name="Han D.K."/>
        </authorList>
    </citation>
    <scope>PHOSPHORYLATION [LARGE SCALE ANALYSIS] AT SER-107</scope>
    <scope>IDENTIFICATION BY MASS SPECTROMETRY [LARGE SCALE ANALYSIS]</scope>
    <source>
        <tissue>Leukemic T-cell</tissue>
    </source>
</reference>
<reference key="11">
    <citation type="journal article" date="2013" name="J. Proteome Res.">
        <title>Toward a comprehensive characterization of a human cancer cell phosphoproteome.</title>
        <authorList>
            <person name="Zhou H."/>
            <person name="Di Palma S."/>
            <person name="Preisinger C."/>
            <person name="Peng M."/>
            <person name="Polat A.N."/>
            <person name="Heck A.J."/>
            <person name="Mohammed S."/>
        </authorList>
    </citation>
    <scope>PHOSPHORYLATION [LARGE SCALE ANALYSIS] AT SER-85</scope>
    <scope>IDENTIFICATION BY MASS SPECTROMETRY [LARGE SCALE ANALYSIS]</scope>
    <source>
        <tissue>Erythroleukemia</tissue>
    </source>
</reference>
<reference key="12">
    <citation type="journal article" date="1994" name="Hum. Mol. Genet.">
        <title>Molecular basis for human erythrocyte AMP deaminase deficiency: screening for the major point mutation and identification of other mutations.</title>
        <authorList>
            <person name="Yamada Y."/>
            <person name="Goto H."/>
            <person name="Murase T."/>
            <person name="Ogasawara N."/>
        </authorList>
    </citation>
    <scope>VARIANTS AMPDDE LYS-310; VAL-320; THR-324; CYS-331; CYS-402; ARG-450 AND LEU-585</scope>
</reference>
<reference key="13">
    <citation type="journal article" date="1998" name="Adv. Exp. Med. Biol.">
        <title>Gene mutations responsible for human erythrocyte AMP deaminase deficiency in Poles.</title>
        <authorList>
            <person name="Yamada Y."/>
            <person name="Makarewicz W."/>
            <person name="Goto H."/>
            <person name="Nomura N."/>
            <person name="Kitoh H."/>
            <person name="Ogasawara N."/>
        </authorList>
    </citation>
    <scope>VARIANT AMPDDE LEU-311</scope>
</reference>
<reference key="14">
    <citation type="journal article" date="2001" name="Hum. Mutat.">
        <title>A rare case of complete human erythrocyte AMP deaminase deficiency due to two novel missense mutations in AMPD3.</title>
        <authorList>
            <person name="Yamada Y."/>
            <person name="Goto H."/>
            <person name="Wakamatsu N."/>
            <person name="Ogasawara N."/>
        </authorList>
    </citation>
    <scope>VARIANTS AMPDDE ARG-450 AND PRO-712</scope>
</reference>
<feature type="chain" id="PRO_0000194410" description="AMP deaminase 3">
    <location>
        <begin position="1"/>
        <end position="767"/>
    </location>
</feature>
<feature type="region of interest" description="Disordered" evidence="3">
    <location>
        <begin position="89"/>
        <end position="111"/>
    </location>
</feature>
<feature type="region of interest" description="Disordered" evidence="3">
    <location>
        <begin position="181"/>
        <end position="205"/>
    </location>
</feature>
<feature type="active site" description="Proton acceptor" evidence="2">
    <location>
        <position position="608"/>
    </location>
</feature>
<feature type="binding site" evidence="1">
    <location>
        <position position="317"/>
    </location>
    <ligand>
        <name>Zn(2+)</name>
        <dbReference type="ChEBI" id="CHEBI:29105"/>
        <note>catalytic</note>
    </ligand>
</feature>
<feature type="binding site" evidence="1">
    <location>
        <position position="319"/>
    </location>
    <ligand>
        <name>substrate</name>
    </ligand>
</feature>
<feature type="binding site" evidence="1">
    <location>
        <position position="319"/>
    </location>
    <ligand>
        <name>Zn(2+)</name>
        <dbReference type="ChEBI" id="CHEBI:29105"/>
        <note>catalytic</note>
    </ligand>
</feature>
<feature type="binding site" evidence="1">
    <location>
        <begin position="388"/>
        <end position="393"/>
    </location>
    <ligand>
        <name>substrate</name>
    </ligand>
</feature>
<feature type="binding site" evidence="1">
    <location>
        <position position="586"/>
    </location>
    <ligand>
        <name>Zn(2+)</name>
        <dbReference type="ChEBI" id="CHEBI:29105"/>
        <note>catalytic</note>
    </ligand>
</feature>
<feature type="binding site" evidence="1">
    <location>
        <position position="589"/>
    </location>
    <ligand>
        <name>substrate</name>
    </ligand>
</feature>
<feature type="binding site" evidence="1">
    <location>
        <position position="663"/>
    </location>
    <ligand>
        <name>Zn(2+)</name>
        <dbReference type="ChEBI" id="CHEBI:29105"/>
        <note>catalytic</note>
    </ligand>
</feature>
<feature type="binding site" evidence="1">
    <location>
        <begin position="664"/>
        <end position="667"/>
    </location>
    <ligand>
        <name>substrate</name>
    </ligand>
</feature>
<feature type="modified residue" description="Phosphoserine" evidence="16">
    <location>
        <position position="85"/>
    </location>
</feature>
<feature type="modified residue" description="Phosphoserine" evidence="15">
    <location>
        <position position="107"/>
    </location>
</feature>
<feature type="splice variant" id="VSP_044230" description="In isoform 4." evidence="10">
    <location>
        <begin position="1"/>
        <end position="159"/>
    </location>
</feature>
<feature type="splice variant" id="VSP_001275" description="In isoform 1A and isoform 2." evidence="9 10 11">
    <original>M</original>
    <variation>MALSSEPAEM</variation>
    <location>
        <position position="1"/>
    </location>
</feature>
<feature type="splice variant" id="VSP_001276" description="In isoform 1C and isoform 3." evidence="9 10">
    <original>M</original>
    <variation>MEPGSAEM</variation>
    <location>
        <position position="1"/>
    </location>
</feature>
<feature type="splice variant" id="VSP_001277" description="In isoform 1A." evidence="9">
    <location>
        <begin position="208"/>
        <end position="767"/>
    </location>
</feature>
<feature type="splice variant" id="VSP_001278" description="In isoform 1C." evidence="9">
    <location>
        <begin position="652"/>
        <end position="767"/>
    </location>
</feature>
<feature type="sequence variant" id="VAR_033499" description="In dbSNP:rs11042836.">
    <original>R</original>
    <variation>W</variation>
    <location>
        <position position="185"/>
    </location>
</feature>
<feature type="sequence variant" id="VAR_042606" description="In AMPDDE." evidence="5">
    <original>N</original>
    <variation>K</variation>
    <location>
        <position position="310"/>
    </location>
</feature>
<feature type="sequence variant" id="VAR_042607" description="In AMPDDE; dbSNP:rs117706710." evidence="8">
    <original>V</original>
    <variation>L</variation>
    <location>
        <position position="311"/>
    </location>
</feature>
<feature type="sequence variant" id="VAR_042608" description="In AMPDDE; dbSNP:rs147542803." evidence="5">
    <original>A</original>
    <variation>V</variation>
    <location>
        <position position="320"/>
    </location>
</feature>
<feature type="sequence variant" id="VAR_042609" description="In AMPDDE; dbSNP:rs750004231." evidence="5">
    <original>M</original>
    <variation>T</variation>
    <location>
        <position position="324"/>
    </location>
</feature>
<feature type="sequence variant" id="VAR_042610" description="In AMPDDE; dbSNP:rs758038726." evidence="5">
    <original>R</original>
    <variation>C</variation>
    <location>
        <position position="331"/>
    </location>
</feature>
<feature type="sequence variant" id="VAR_042611" description="In AMPDDE; dbSNP:rs766280048." evidence="5">
    <original>R</original>
    <variation>C</variation>
    <location>
        <position position="402"/>
    </location>
</feature>
<feature type="sequence variant" id="VAR_042612" description="In AMPDDE; dbSNP:rs1273151844." evidence="4 5">
    <original>W</original>
    <variation>R</variation>
    <location>
        <position position="450"/>
    </location>
</feature>
<feature type="sequence variant" id="VAR_042613" description="In dbSNP:rs36003153.">
    <original>Y</original>
    <variation>H</variation>
    <location>
        <position position="455"/>
    </location>
</feature>
<feature type="sequence variant" id="VAR_009881" description="In AMPDDE; enzyme inactive; dbSNP:rs3741040." evidence="6">
    <original>R</original>
    <variation>C</variation>
    <location>
        <position position="573"/>
    </location>
</feature>
<feature type="sequence variant" id="VAR_042614" description="In AMPDDE; dbSNP:rs748852415." evidence="5">
    <original>P</original>
    <variation>L</variation>
    <location>
        <position position="585"/>
    </location>
</feature>
<feature type="sequence variant" id="VAR_042615" description="In AMPDDE." evidence="4">
    <original>Q</original>
    <variation>P</variation>
    <location>
        <position position="712"/>
    </location>
</feature>
<protein>
    <recommendedName>
        <fullName evidence="13">AMP deaminase 3</fullName>
        <ecNumber evidence="7">3.5.4.6</ecNumber>
    </recommendedName>
    <alternativeName>
        <fullName>AMP deaminase isoform E</fullName>
    </alternativeName>
    <alternativeName>
        <fullName>Erythrocyte AMP deaminase</fullName>
    </alternativeName>
</protein>